<keyword id="KW-1185">Reference proteome</keyword>
<gene>
    <name type="ORF">IIV3-063R</name>
</gene>
<reference key="1">
    <citation type="journal article" date="2006" name="J. Virol.">
        <title>Genome of invertebrate iridescent virus type 3 (mosquito iridescent virus).</title>
        <authorList>
            <person name="Delhon G."/>
            <person name="Tulman E.R."/>
            <person name="Afonso C.L."/>
            <person name="Lu Z."/>
            <person name="Becnel J.J."/>
            <person name="Moser B.A."/>
            <person name="Kutish G.F."/>
            <person name="Rock D.L."/>
        </authorList>
    </citation>
    <scope>NUCLEOTIDE SEQUENCE [LARGE SCALE GENOMIC DNA]</scope>
</reference>
<proteinExistence type="inferred from homology"/>
<feature type="chain" id="PRO_0000377783" description="Uncharacterized protein 063R">
    <location>
        <begin position="1"/>
        <end position="212"/>
    </location>
</feature>
<comment type="similarity">
    <text evidence="1">Belongs to the IIV-6 309L family.</text>
</comment>
<accession>Q196Z7</accession>
<organismHost>
    <name type="scientific">Aedes vexans</name>
    <name type="common">Inland floodwater mosquito</name>
    <name type="synonym">Culex vexans</name>
    <dbReference type="NCBI Taxonomy" id="7163"/>
</organismHost>
<organismHost>
    <name type="scientific">Culex territans</name>
    <dbReference type="NCBI Taxonomy" id="42431"/>
</organismHost>
<organismHost>
    <name type="scientific">Culiseta annulata</name>
    <dbReference type="NCBI Taxonomy" id="332058"/>
</organismHost>
<organismHost>
    <name type="scientific">Ochlerotatus sollicitans</name>
    <name type="common">eastern saltmarsh mosquito</name>
    <dbReference type="NCBI Taxonomy" id="310513"/>
</organismHost>
<organismHost>
    <name type="scientific">Ochlerotatus taeniorhynchus</name>
    <name type="common">Black salt marsh mosquito</name>
    <name type="synonym">Aedes taeniorhynchus</name>
    <dbReference type="NCBI Taxonomy" id="329105"/>
</organismHost>
<organismHost>
    <name type="scientific">Psorophora ferox</name>
    <dbReference type="NCBI Taxonomy" id="7183"/>
</organismHost>
<evidence type="ECO:0000305" key="1"/>
<protein>
    <recommendedName>
        <fullName>Uncharacterized protein 063R</fullName>
    </recommendedName>
</protein>
<organism>
    <name type="scientific">Invertebrate iridescent virus 3</name>
    <name type="common">IIV-3</name>
    <name type="synonym">Mosquito iridescent virus</name>
    <dbReference type="NCBI Taxonomy" id="345201"/>
    <lineage>
        <taxon>Viruses</taxon>
        <taxon>Varidnaviria</taxon>
        <taxon>Bamfordvirae</taxon>
        <taxon>Nucleocytoviricota</taxon>
        <taxon>Megaviricetes</taxon>
        <taxon>Pimascovirales</taxon>
        <taxon>Iridoviridae</taxon>
        <taxon>Betairidovirinae</taxon>
        <taxon>Chloriridovirus</taxon>
    </lineage>
</organism>
<dbReference type="EMBL" id="DQ643392">
    <property type="protein sequence ID" value="ABF82093.1"/>
    <property type="molecule type" value="Genomic_DNA"/>
</dbReference>
<dbReference type="RefSeq" id="YP_654635.1">
    <property type="nucleotide sequence ID" value="NC_008187.1"/>
</dbReference>
<dbReference type="KEGG" id="vg:4156313"/>
<dbReference type="OrthoDB" id="11162at10239"/>
<dbReference type="Proteomes" id="UP000001358">
    <property type="component" value="Genome"/>
</dbReference>
<sequence>MALYGLRQLDHRNAYASNGSYKPYLINNLSYLHDSSFVPVYKGCGTTDMGQHFTSEYPPYVGWVTRDATTMDASAGVRLCLDTPPMTSGANRTLFDARYKQWYPDYTHLPGQIQYYMRPEMTRPFAPPLWSADTTALAGIRIDSMDNVHYDFYRANGQNGCPAQPERCGECFIRELRDVQDHREDILASHTARLNRNKYEPIWFNWTSQYLR</sequence>
<name>VF309_IIV3</name>